<proteinExistence type="evidence at protein level"/>
<protein>
    <recommendedName>
        <fullName>Solute carrier family 12 member 1</fullName>
    </recommendedName>
    <alternativeName>
        <fullName>Bumetanide-sensitive sodium-(potassium)-chloride cotransporter 1</fullName>
        <shortName>BSC1</shortName>
    </alternativeName>
    <alternativeName>
        <fullName>Kidney-specific Na-K-Cl symporter</fullName>
    </alternativeName>
    <alternativeName>
        <fullName evidence="10">Na-K-2Cl cotransporter 2</fullName>
        <shortName>NKCC2</shortName>
    </alternativeName>
</protein>
<feature type="chain" id="PRO_0000178018" description="Solute carrier family 12 member 1">
    <location>
        <begin position="1"/>
        <end position="1099"/>
    </location>
</feature>
<feature type="topological domain" description="Cytoplasmic" evidence="11">
    <location>
        <begin position="1"/>
        <end position="177"/>
    </location>
</feature>
<feature type="transmembrane region" description="Helical" evidence="3">
    <location>
        <begin position="178"/>
        <end position="198"/>
    </location>
</feature>
<feature type="topological domain" description="Extracellular" evidence="11">
    <location>
        <begin position="199"/>
        <end position="201"/>
    </location>
</feature>
<feature type="transmembrane region" description="Helical" evidence="3">
    <location>
        <begin position="202"/>
        <end position="222"/>
    </location>
</feature>
<feature type="topological domain" description="Cytoplasmic" evidence="11">
    <location>
        <begin position="223"/>
        <end position="259"/>
    </location>
</feature>
<feature type="transmembrane region" description="Helical" evidence="3">
    <location>
        <begin position="260"/>
        <end position="280"/>
    </location>
</feature>
<feature type="topological domain" description="Extracellular" evidence="11">
    <location>
        <begin position="281"/>
        <end position="302"/>
    </location>
</feature>
<feature type="transmembrane region" description="Helical" evidence="3">
    <location>
        <begin position="303"/>
        <end position="323"/>
    </location>
</feature>
<feature type="topological domain" description="Cytoplasmic" evidence="11">
    <location>
        <begin position="324"/>
        <end position="327"/>
    </location>
</feature>
<feature type="transmembrane region" description="Helical" evidence="3">
    <location>
        <begin position="328"/>
        <end position="348"/>
    </location>
</feature>
<feature type="topological domain" description="Extracellular" evidence="11">
    <location>
        <begin position="349"/>
        <end position="379"/>
    </location>
</feature>
<feature type="transmembrane region" description="Helical" evidence="3">
    <location>
        <begin position="380"/>
        <end position="400"/>
    </location>
</feature>
<feature type="topological domain" description="Cytoplasmic" evidence="11">
    <location>
        <begin position="401"/>
        <end position="417"/>
    </location>
</feature>
<feature type="transmembrane region" description="Helical" evidence="3">
    <location>
        <begin position="418"/>
        <end position="438"/>
    </location>
</feature>
<feature type="topological domain" description="Extracellular" evidence="11">
    <location>
        <begin position="439"/>
        <end position="550"/>
    </location>
</feature>
<feature type="transmembrane region" description="Helical" evidence="3">
    <location>
        <begin position="551"/>
        <end position="571"/>
    </location>
</feature>
<feature type="transmembrane region" description="Helical" evidence="3">
    <location>
        <begin position="572"/>
        <end position="592"/>
    </location>
</feature>
<feature type="topological domain" description="Extracellular" evidence="11">
    <location>
        <begin position="593"/>
        <end position="609"/>
    </location>
</feature>
<feature type="transmembrane region" description="Helical" evidence="3">
    <location>
        <begin position="610"/>
        <end position="630"/>
    </location>
</feature>
<feature type="topological domain" description="Cytoplasmic" evidence="11">
    <location>
        <begin position="631"/>
        <end position="1099"/>
    </location>
</feature>
<feature type="region of interest" description="Disordered" evidence="4">
    <location>
        <begin position="31"/>
        <end position="53"/>
    </location>
</feature>
<feature type="short sequence motif" description="RFXV motif" evidence="5">
    <location>
        <begin position="20"/>
        <end position="23"/>
    </location>
</feature>
<feature type="modified residue" description="Phosphoserine" evidence="1">
    <location>
        <position position="61"/>
    </location>
</feature>
<feature type="modified residue" description="Phosphoserine; by OXSR1 and STK39" evidence="5">
    <location>
        <position position="91"/>
    </location>
</feature>
<feature type="modified residue" description="Phosphothreonine" evidence="5">
    <location>
        <position position="95"/>
    </location>
</feature>
<feature type="modified residue" description="Phosphothreonine; by OXSR1 and STK39" evidence="5">
    <location>
        <position position="100"/>
    </location>
</feature>
<feature type="modified residue" description="Phosphothreonine; by OXSR1 and STK39" evidence="5">
    <location>
        <position position="105"/>
    </location>
</feature>
<feature type="modified residue" description="Phosphothreonine" evidence="2">
    <location>
        <position position="118"/>
    </location>
</feature>
<feature type="modified residue" description="Phosphoserine" evidence="2">
    <location>
        <position position="120"/>
    </location>
</feature>
<feature type="modified residue" description="Phosphoserine; by AMPK" evidence="5">
    <location>
        <position position="130"/>
    </location>
</feature>
<feature type="modified residue" description="Phosphoserine" evidence="2">
    <location>
        <position position="148"/>
    </location>
</feature>
<feature type="glycosylation site" description="N-linked (GlcNAc...) asparagine" evidence="3">
    <location>
        <position position="446"/>
    </location>
</feature>
<feature type="glycosylation site" description="N-linked (GlcNAc...) asparagine" evidence="3">
    <location>
        <position position="456"/>
    </location>
</feature>
<feature type="splice variant" id="VSP_035701" description="In isoform F." evidence="10">
    <original>LIILLSTMVTSITGLSTSAIATNGF</original>
    <variation>IIIGLSVVVTTLTGISMSAICTNGV</variation>
    <location>
        <begin position="214"/>
        <end position="238"/>
    </location>
</feature>
<feature type="sequence variant" id="VAR_010223" description="In BARTS1; dbSNP:rs137853158." evidence="8">
    <original>V</original>
    <variation>F</variation>
    <location>
        <position position="272"/>
    </location>
</feature>
<feature type="sequence variant" id="VAR_010224" description="In BARTS1; dbSNP:rs137853157." evidence="8">
    <original>D</original>
    <variation>N</variation>
    <location>
        <position position="648"/>
    </location>
</feature>
<feature type="sequence variant" id="VAR_047257" description="In dbSNP:rs1552311." evidence="8 9">
    <original>V</original>
    <variation>A</variation>
    <location>
        <position position="958"/>
    </location>
</feature>
<feature type="mutagenesis site" description="Abolished interaction with OXSR1/OSR1 and STK39/SPAK and subsequent phosphorylation and activation." evidence="5">
    <original>R</original>
    <variation>A</variation>
    <location>
        <position position="20"/>
    </location>
</feature>
<feature type="mutagenesis site" description="Abolished phosphoryation by OXSR1/OSR1 and STK39/SPAK in vitro." evidence="5">
    <original>TYYLQT</original>
    <variation>AYYLQA</variation>
    <location>
        <begin position="95"/>
        <end position="100"/>
    </location>
</feature>
<feature type="mutagenesis site" description="Does not affect interaction with OXSR1/OSR1 and STK39/SPAK." evidence="5">
    <original>K</original>
    <variation>A</variation>
    <location>
        <position position="176"/>
    </location>
</feature>
<feature type="mutagenesis site" description="Does not affect interaction with OXSR1/OSR1 and STK39/SPAK." evidence="5">
    <original>K</original>
    <variation>A</variation>
    <location>
        <position position="965"/>
    </location>
</feature>
<feature type="sequence conflict" description="In Ref. 1; AAB07364." evidence="11" ref="1">
    <original>Q</original>
    <variation>H</variation>
    <location>
        <position position="75"/>
    </location>
</feature>
<feature type="sequence conflict" description="In Ref. 1; AAB07364." evidence="11" ref="1">
    <original>VV</original>
    <variation>TI</variation>
    <location sequence="Q13621-3">
        <begin position="220"/>
        <end position="221"/>
    </location>
</feature>
<feature type="sequence conflict" description="In Ref. 1; AAB07364." evidence="11" ref="1">
    <original>L</original>
    <variation>I</variation>
    <location sequence="Q13621-3">
        <position position="225"/>
    </location>
</feature>
<feature type="sequence conflict" description="In Ref. 1; AAB07364." evidence="11" ref="1">
    <original>I</original>
    <variation>M</variation>
    <location sequence="Q13621-3">
        <position position="228"/>
    </location>
</feature>
<feature type="sequence conflict" description="In Ref. 1; AAB07364." evidence="11" ref="1">
    <original>M</original>
    <variation>T</variation>
    <location sequence="Q13621-3">
        <position position="230"/>
    </location>
</feature>
<feature type="sequence conflict" description="In Ref. 1; AAB07364." evidence="11" ref="1">
    <original>C</original>
    <variation>A</variation>
    <location sequence="Q13621-3">
        <position position="234"/>
    </location>
</feature>
<name>S12A1_HUMAN</name>
<keyword id="KW-0025">Alternative splicing</keyword>
<keyword id="KW-0910">Bartter syndrome</keyword>
<keyword id="KW-1003">Cell membrane</keyword>
<keyword id="KW-0868">Chloride</keyword>
<keyword id="KW-0225">Disease variant</keyword>
<keyword id="KW-0325">Glycoprotein</keyword>
<keyword id="KW-0406">Ion transport</keyword>
<keyword id="KW-0472">Membrane</keyword>
<keyword id="KW-0523">Neurodegeneration</keyword>
<keyword id="KW-0597">Phosphoprotein</keyword>
<keyword id="KW-0630">Potassium</keyword>
<keyword id="KW-0633">Potassium transport</keyword>
<keyword id="KW-1267">Proteomics identification</keyword>
<keyword id="KW-1185">Reference proteome</keyword>
<keyword id="KW-0915">Sodium</keyword>
<keyword id="KW-0739">Sodium transport</keyword>
<keyword id="KW-0769">Symport</keyword>
<keyword id="KW-0812">Transmembrane</keyword>
<keyword id="KW-1133">Transmembrane helix</keyword>
<keyword id="KW-0813">Transport</keyword>
<evidence type="ECO:0000250" key="1">
    <source>
        <dbReference type="UniProtKB" id="P55014"/>
    </source>
</evidence>
<evidence type="ECO:0000250" key="2">
    <source>
        <dbReference type="UniProtKB" id="P55016"/>
    </source>
</evidence>
<evidence type="ECO:0000255" key="3"/>
<evidence type="ECO:0000256" key="4">
    <source>
        <dbReference type="SAM" id="MobiDB-lite"/>
    </source>
</evidence>
<evidence type="ECO:0000269" key="5">
    <source>
    </source>
</evidence>
<evidence type="ECO:0000269" key="6">
    <source>
    </source>
</evidence>
<evidence type="ECO:0000269" key="7">
    <source>
    </source>
</evidence>
<evidence type="ECO:0000269" key="8">
    <source>
    </source>
</evidence>
<evidence type="ECO:0000269" key="9">
    <source ref="2"/>
</evidence>
<evidence type="ECO:0000303" key="10">
    <source>
    </source>
</evidence>
<evidence type="ECO:0000305" key="11"/>
<comment type="function">
    <text evidence="1 2 5">Renal sodium, potassium and chloride ion cotransporter that mediates the transepithelial NaCl reabsorption in the thick ascending limb and plays an essential role in the urinary concentration and volume regulation (PubMed:21321328). Electrically silent transporter system (By similarity).</text>
</comment>
<comment type="catalytic activity">
    <reaction evidence="1 2">
        <text>K(+)(out) + 2 chloride(out) + Na(+)(out) = K(+)(in) + 2 chloride(in) + Na(+)(in)</text>
        <dbReference type="Rhea" id="RHEA:72395"/>
        <dbReference type="ChEBI" id="CHEBI:17996"/>
        <dbReference type="ChEBI" id="CHEBI:29101"/>
        <dbReference type="ChEBI" id="CHEBI:29103"/>
    </reaction>
    <physiologicalReaction direction="left-to-right" evidence="1 2">
        <dbReference type="Rhea" id="RHEA:72396"/>
    </physiologicalReaction>
</comment>
<comment type="activity regulation">
    <text evidence="6">Activated following phosphorylation by OXSR1/OSR1 and STK39/SPAK downstream of WNK kinases (WNK1, WNK2, WNK3 or WNK4).</text>
</comment>
<comment type="subunit">
    <text evidence="2">When phosphorylated, interacts with PPP3CB.</text>
</comment>
<comment type="subcellular location">
    <subcellularLocation>
        <location evidence="5">Apical cell membrane</location>
        <topology evidence="3">Multi-pass membrane protein</topology>
    </subcellularLocation>
</comment>
<comment type="alternative products">
    <event type="alternative splicing"/>
    <isoform>
        <id>Q13621-1</id>
        <name>A</name>
        <sequence type="displayed"/>
    </isoform>
    <isoform>
        <id>Q13621-2</id>
        <name>B</name>
        <sequence type="not described"/>
    </isoform>
    <isoform>
        <id>Q13621-3</id>
        <name>F</name>
        <sequence type="described" ref="VSP_035701"/>
    </isoform>
</comment>
<comment type="tissue specificity">
    <text evidence="7">Kidney; localizes to the thick ascending limbs (at protein level).</text>
</comment>
<comment type="domain">
    <text evidence="5">The RFXV motif mediates binding with OXSR1/OSR1 and STK39/SPAK.</text>
</comment>
<comment type="PTM">
    <text evidence="5">Phosphorylated at Ser-91, Thr-100 and Thr-105 by OXSR1/OSR1 and STK39/SPAK downstream of WNK kinases (WNK1, WNK2, WNK3 or WNK4), promoting its activity.</text>
</comment>
<comment type="disease" evidence="8">
    <disease id="DI-00173">
        <name>Bartter syndrome 1, antenatal</name>
        <acronym>BARTS1</acronym>
        <description>A form of Bartter syndrome, an autosomal recessive disorder characterized by impaired salt reabsorption in the thick ascending loop of Henle with pronounced salt wasting, hypokalemic metabolic alkalosis, and varying degrees of hypercalciuria. BARTS1 is a life-threatening condition beginning in utero, with marked fetal polyuria that leads to polyhydramnios and premature delivery. Another hallmark is a marked hypercalciuria and, as a secondary consequence, the development of nephrocalcinosis and osteopenia.</description>
        <dbReference type="MIM" id="601678"/>
    </disease>
    <text>The disease is caused by variants affecting the gene represented in this entry.</text>
</comment>
<comment type="similarity">
    <text evidence="11">Belongs to the SLC12A transporter family.</text>
</comment>
<dbReference type="EMBL" id="U58130">
    <property type="protein sequence ID" value="AAB07364.1"/>
    <property type="molecule type" value="mRNA"/>
</dbReference>
<dbReference type="EMBL" id="EF559316">
    <property type="protein sequence ID" value="ABU69043.2"/>
    <property type="molecule type" value="mRNA"/>
</dbReference>
<dbReference type="EMBL" id="AC023355">
    <property type="status" value="NOT_ANNOTATED_CDS"/>
    <property type="molecule type" value="Genomic_DNA"/>
</dbReference>
<dbReference type="EMBL" id="AC066612">
    <property type="status" value="NOT_ANNOTATED_CDS"/>
    <property type="molecule type" value="Genomic_DNA"/>
</dbReference>
<dbReference type="CCDS" id="CCDS10129.2">
    <molecule id="Q13621-1"/>
</dbReference>
<dbReference type="CCDS" id="CCDS53940.1">
    <molecule id="Q13621-3"/>
</dbReference>
<dbReference type="RefSeq" id="NP_000329.2">
    <molecule id="Q13621-1"/>
    <property type="nucleotide sequence ID" value="NM_000338.3"/>
</dbReference>
<dbReference type="RefSeq" id="NP_001171761.1">
    <molecule id="Q13621-3"/>
    <property type="nucleotide sequence ID" value="NM_001184832.2"/>
</dbReference>
<dbReference type="SMR" id="Q13621"/>
<dbReference type="BioGRID" id="112446">
    <property type="interactions" value="6"/>
</dbReference>
<dbReference type="CORUM" id="Q13621"/>
<dbReference type="FunCoup" id="Q13621">
    <property type="interactions" value="473"/>
</dbReference>
<dbReference type="IntAct" id="Q13621">
    <property type="interactions" value="4"/>
</dbReference>
<dbReference type="STRING" id="9606.ENSP00000495332"/>
<dbReference type="ChEMBL" id="CHEMBL1874"/>
<dbReference type="DrugBank" id="DB04630">
    <property type="generic name" value="Aldosterone"/>
</dbReference>
<dbReference type="DrugBank" id="DB00436">
    <property type="generic name" value="Bendroflumethiazide"/>
</dbReference>
<dbReference type="DrugBank" id="DB00887">
    <property type="generic name" value="Bumetanide"/>
</dbReference>
<dbReference type="DrugBank" id="DB02860">
    <property type="generic name" value="Calyculin A"/>
</dbReference>
<dbReference type="DrugBank" id="DB00534">
    <property type="generic name" value="Chlormerodrin"/>
</dbReference>
<dbReference type="DrugBank" id="DB00310">
    <property type="generic name" value="Chlorthalidone"/>
</dbReference>
<dbReference type="DrugBank" id="DB00903">
    <property type="generic name" value="Etacrynic acid"/>
</dbReference>
<dbReference type="DrugBank" id="DB00695">
    <property type="generic name" value="Furosemide"/>
</dbReference>
<dbReference type="DrugBank" id="DB00774">
    <property type="generic name" value="Hydroflumethiazide"/>
</dbReference>
<dbReference type="DrugBank" id="DB00232">
    <property type="generic name" value="Methyclothiazide"/>
</dbReference>
<dbReference type="DrugBank" id="DB02925">
    <property type="generic name" value="Piretanide"/>
</dbReference>
<dbReference type="DrugBank" id="DB14500">
    <property type="generic name" value="Potassium"/>
</dbReference>
<dbReference type="DrugBank" id="DB11098">
    <property type="generic name" value="Potassium bicarbonate"/>
</dbReference>
<dbReference type="DrugBank" id="DB00761">
    <property type="generic name" value="Potassium chloride"/>
</dbReference>
<dbReference type="DrugBank" id="DB13620">
    <property type="generic name" value="Potassium gluconate"/>
</dbReference>
<dbReference type="DrugBank" id="DB01325">
    <property type="generic name" value="Quinethazone"/>
</dbReference>
<dbReference type="DrugBank" id="DB00214">
    <property type="generic name" value="Torasemide"/>
</dbReference>
<dbReference type="DrugBank" id="DB01021">
    <property type="generic name" value="Trichlormethiazide"/>
</dbReference>
<dbReference type="DrugCentral" id="Q13621"/>
<dbReference type="GuidetoPHARMACOLOGY" id="968"/>
<dbReference type="TCDB" id="2.A.30.1.2">
    <property type="family name" value="the cation-chloride cotransporter (ccc) family"/>
</dbReference>
<dbReference type="GlyCosmos" id="Q13621">
    <property type="glycosylation" value="2 sites, No reported glycans"/>
</dbReference>
<dbReference type="GlyGen" id="Q13621">
    <property type="glycosylation" value="5 sites, 1 O-linked glycan (1 site)"/>
</dbReference>
<dbReference type="iPTMnet" id="Q13621"/>
<dbReference type="PhosphoSitePlus" id="Q13621"/>
<dbReference type="BioMuta" id="SLC12A1"/>
<dbReference type="DMDM" id="212276464"/>
<dbReference type="jPOST" id="Q13621"/>
<dbReference type="MassIVE" id="Q13621"/>
<dbReference type="PaxDb" id="9606-ENSP00000379822"/>
<dbReference type="PeptideAtlas" id="Q13621"/>
<dbReference type="ProteomicsDB" id="19762"/>
<dbReference type="ProteomicsDB" id="59614">
    <molecule id="Q13621-1"/>
</dbReference>
<dbReference type="ProteomicsDB" id="59615">
    <molecule id="Q13621-3"/>
</dbReference>
<dbReference type="Antibodypedia" id="11970">
    <property type="antibodies" value="249 antibodies from 35 providers"/>
</dbReference>
<dbReference type="DNASU" id="6557"/>
<dbReference type="Ensembl" id="ENST00000380993.8">
    <molecule id="Q13621-1"/>
    <property type="protein sequence ID" value="ENSP00000370381.3"/>
    <property type="gene ID" value="ENSG00000074803.21"/>
</dbReference>
<dbReference type="Ensembl" id="ENST00000396577.7">
    <molecule id="Q13621-3"/>
    <property type="protein sequence ID" value="ENSP00000379822.3"/>
    <property type="gene ID" value="ENSG00000074803.21"/>
</dbReference>
<dbReference type="Ensembl" id="ENST00000647232.1">
    <molecule id="Q13621-3"/>
    <property type="protein sequence ID" value="ENSP00000493875.1"/>
    <property type="gene ID" value="ENSG00000074803.21"/>
</dbReference>
<dbReference type="Ensembl" id="ENST00000647546.1">
    <molecule id="Q13621-1"/>
    <property type="protein sequence ID" value="ENSP00000495332.1"/>
    <property type="gene ID" value="ENSG00000074803.21"/>
</dbReference>
<dbReference type="GeneID" id="6557"/>
<dbReference type="KEGG" id="hsa:6557"/>
<dbReference type="MANE-Select" id="ENST00000380993.8">
    <property type="protein sequence ID" value="ENSP00000370381.3"/>
    <property type="RefSeq nucleotide sequence ID" value="NM_000338.3"/>
    <property type="RefSeq protein sequence ID" value="NP_000329.2"/>
</dbReference>
<dbReference type="UCSC" id="uc001zwn.5">
    <molecule id="Q13621-1"/>
    <property type="organism name" value="human"/>
</dbReference>
<dbReference type="AGR" id="HGNC:10910"/>
<dbReference type="CTD" id="6557"/>
<dbReference type="DisGeNET" id="6557"/>
<dbReference type="GeneCards" id="SLC12A1"/>
<dbReference type="HGNC" id="HGNC:10910">
    <property type="gene designation" value="SLC12A1"/>
</dbReference>
<dbReference type="HPA" id="ENSG00000074803">
    <property type="expression patterns" value="Tissue enriched (kidney)"/>
</dbReference>
<dbReference type="MalaCards" id="SLC12A1"/>
<dbReference type="MIM" id="600839">
    <property type="type" value="gene"/>
</dbReference>
<dbReference type="MIM" id="601678">
    <property type="type" value="phenotype"/>
</dbReference>
<dbReference type="neXtProt" id="NX_Q13621"/>
<dbReference type="OpenTargets" id="ENSG00000074803"/>
<dbReference type="PharmGKB" id="PA320"/>
<dbReference type="VEuPathDB" id="HostDB:ENSG00000074803"/>
<dbReference type="eggNOG" id="KOG2083">
    <property type="taxonomic scope" value="Eukaryota"/>
</dbReference>
<dbReference type="GeneTree" id="ENSGT00940000158030"/>
<dbReference type="HOGENOM" id="CLU_001883_0_0_1"/>
<dbReference type="InParanoid" id="Q13621"/>
<dbReference type="OMA" id="FRIKFAE"/>
<dbReference type="OrthoDB" id="2020542at2759"/>
<dbReference type="PAN-GO" id="Q13621">
    <property type="GO annotations" value="9 GO annotations based on evolutionary models"/>
</dbReference>
<dbReference type="PhylomeDB" id="Q13621"/>
<dbReference type="TreeFam" id="TF313191"/>
<dbReference type="PathwayCommons" id="Q13621"/>
<dbReference type="Reactome" id="R-HSA-426117">
    <property type="pathway name" value="Cation-coupled Chloride cotransporters"/>
</dbReference>
<dbReference type="Reactome" id="R-HSA-5619104">
    <property type="pathway name" value="Defective SLC12A1 causes Bartter syndrome 1 (BS1)"/>
</dbReference>
<dbReference type="SignaLink" id="Q13621"/>
<dbReference type="SIGNOR" id="Q13621"/>
<dbReference type="BioGRID-ORCS" id="6557">
    <property type="hits" value="8 hits in 1150 CRISPR screens"/>
</dbReference>
<dbReference type="ChiTaRS" id="SLC12A1">
    <property type="organism name" value="human"/>
</dbReference>
<dbReference type="GenomeRNAi" id="6557"/>
<dbReference type="Pharos" id="Q13621">
    <property type="development level" value="Tclin"/>
</dbReference>
<dbReference type="PRO" id="PR:Q13621"/>
<dbReference type="Proteomes" id="UP000005640">
    <property type="component" value="Chromosome 15"/>
</dbReference>
<dbReference type="RNAct" id="Q13621">
    <property type="molecule type" value="protein"/>
</dbReference>
<dbReference type="Bgee" id="ENSG00000074803">
    <property type="expression patterns" value="Expressed in renal medulla and 147 other cell types or tissues"/>
</dbReference>
<dbReference type="ExpressionAtlas" id="Q13621">
    <property type="expression patterns" value="baseline and differential"/>
</dbReference>
<dbReference type="GO" id="GO:0016324">
    <property type="term" value="C:apical plasma membrane"/>
    <property type="evidence" value="ECO:0000314"/>
    <property type="project" value="UniProt"/>
</dbReference>
<dbReference type="GO" id="GO:0070062">
    <property type="term" value="C:extracellular exosome"/>
    <property type="evidence" value="ECO:0000314"/>
    <property type="project" value="UniProtKB"/>
</dbReference>
<dbReference type="GO" id="GO:0016020">
    <property type="term" value="C:membrane"/>
    <property type="evidence" value="ECO:0000304"/>
    <property type="project" value="ProtInc"/>
</dbReference>
<dbReference type="GO" id="GO:0005886">
    <property type="term" value="C:plasma membrane"/>
    <property type="evidence" value="ECO:0000304"/>
    <property type="project" value="Reactome"/>
</dbReference>
<dbReference type="GO" id="GO:0008511">
    <property type="term" value="F:sodium:potassium:chloride symporter activity"/>
    <property type="evidence" value="ECO:0000314"/>
    <property type="project" value="UniProtKB"/>
</dbReference>
<dbReference type="GO" id="GO:0006884">
    <property type="term" value="P:cell volume homeostasis"/>
    <property type="evidence" value="ECO:0000314"/>
    <property type="project" value="UniProt"/>
</dbReference>
<dbReference type="GO" id="GO:0055064">
    <property type="term" value="P:chloride ion homeostasis"/>
    <property type="evidence" value="ECO:0000318"/>
    <property type="project" value="GO_Central"/>
</dbReference>
<dbReference type="GO" id="GO:1902476">
    <property type="term" value="P:chloride transmembrane transport"/>
    <property type="evidence" value="ECO:0000318"/>
    <property type="project" value="GO_Central"/>
</dbReference>
<dbReference type="GO" id="GO:0034220">
    <property type="term" value="P:monoatomic ion transmembrane transport"/>
    <property type="evidence" value="ECO:0000250"/>
    <property type="project" value="BHF-UCL"/>
</dbReference>
<dbReference type="GO" id="GO:0006811">
    <property type="term" value="P:monoatomic ion transport"/>
    <property type="evidence" value="ECO:0000304"/>
    <property type="project" value="Reactome"/>
</dbReference>
<dbReference type="GO" id="GO:0055075">
    <property type="term" value="P:potassium ion homeostasis"/>
    <property type="evidence" value="ECO:0000318"/>
    <property type="project" value="GO_Central"/>
</dbReference>
<dbReference type="GO" id="GO:1990573">
    <property type="term" value="P:potassium ion import across plasma membrane"/>
    <property type="evidence" value="ECO:0000318"/>
    <property type="project" value="GO_Central"/>
</dbReference>
<dbReference type="GO" id="GO:0055078">
    <property type="term" value="P:sodium ion homeostasis"/>
    <property type="evidence" value="ECO:0000318"/>
    <property type="project" value="GO_Central"/>
</dbReference>
<dbReference type="GO" id="GO:0035725">
    <property type="term" value="P:sodium ion transmembrane transport"/>
    <property type="evidence" value="ECO:0000318"/>
    <property type="project" value="GO_Central"/>
</dbReference>
<dbReference type="FunFam" id="1.20.1740.10:FF:000005">
    <property type="entry name" value="Solute carrier family 12 member 1"/>
    <property type="match status" value="1"/>
</dbReference>
<dbReference type="Gene3D" id="1.20.1740.10">
    <property type="entry name" value="Amino acid/polyamine transporter I"/>
    <property type="match status" value="1"/>
</dbReference>
<dbReference type="InterPro" id="IPR004841">
    <property type="entry name" value="AA-permease/SLC12A_dom"/>
</dbReference>
<dbReference type="InterPro" id="IPR013612">
    <property type="entry name" value="AA_permease_N"/>
</dbReference>
<dbReference type="InterPro" id="IPR018491">
    <property type="entry name" value="SLC12_C"/>
</dbReference>
<dbReference type="InterPro" id="IPR002445">
    <property type="entry name" value="Slc12a1"/>
</dbReference>
<dbReference type="InterPro" id="IPR002443">
    <property type="entry name" value="SLC12A1/SLC12A2"/>
</dbReference>
<dbReference type="InterPro" id="IPR004842">
    <property type="entry name" value="SLC12A_fam"/>
</dbReference>
<dbReference type="NCBIfam" id="TIGR00930">
    <property type="entry name" value="2a30"/>
    <property type="match status" value="1"/>
</dbReference>
<dbReference type="PANTHER" id="PTHR11827:SF93">
    <property type="entry name" value="SOLUTE CARRIER FAMILY 12 MEMBER 1"/>
    <property type="match status" value="1"/>
</dbReference>
<dbReference type="PANTHER" id="PTHR11827">
    <property type="entry name" value="SOLUTE CARRIER FAMILY 12, CATION COTRANSPORTERS"/>
    <property type="match status" value="1"/>
</dbReference>
<dbReference type="Pfam" id="PF00324">
    <property type="entry name" value="AA_permease"/>
    <property type="match status" value="1"/>
</dbReference>
<dbReference type="Pfam" id="PF08403">
    <property type="entry name" value="AA_permease_N"/>
    <property type="match status" value="1"/>
</dbReference>
<dbReference type="Pfam" id="PF03522">
    <property type="entry name" value="SLC12"/>
    <property type="match status" value="1"/>
</dbReference>
<dbReference type="PRINTS" id="PR01207">
    <property type="entry name" value="NAKCLTRNSPRT"/>
</dbReference>
<dbReference type="PRINTS" id="PR01209">
    <property type="entry name" value="NAKCLTRSPRT2"/>
</dbReference>
<reference key="1">
    <citation type="journal article" date="1996" name="Nat. Genet.">
        <title>Bartter's syndrome, hypokalemic alkalosis with hypercalciuria, is caused by mutations in the Na-K-2Cl cotransporter NKCC2.</title>
        <authorList>
            <person name="Simon D.B."/>
            <person name="Karet F.E."/>
            <person name="Hamdan J.M."/>
            <person name="Di Pietro A."/>
            <person name="Sanjad S.A."/>
            <person name="Lifton R.P."/>
        </authorList>
    </citation>
    <scope>NUCLEOTIDE SEQUENCE [MRNA] (ISOFORM F)</scope>
    <scope>VARIANTS BARTS1 PHE-272 AND ASN-648</scope>
    <scope>VARIANT ALA-958</scope>
    <scope>ALTERNATIVE SPLICING</scope>
</reference>
<reference key="2">
    <citation type="submission" date="2007-11" db="EMBL/GenBank/DDBJ databases">
        <title>Molecular cloning and characterization of NKCC2A in non-renal tissues.</title>
        <authorList>
            <person name="Di Fulvio M."/>
            <person name="Garzon-Muvdi T."/>
            <person name="Alvarez-Leefmans F.J."/>
        </authorList>
    </citation>
    <scope>NUCLEOTIDE SEQUENCE [MRNA] (ISOFORM A)</scope>
    <scope>VARIANT ALA-958</scope>
    <source>
        <tissue>Spinal ganglion</tissue>
    </source>
</reference>
<reference key="3">
    <citation type="journal article" date="2006" name="Nature">
        <title>Analysis of the DNA sequence and duplication history of human chromosome 15.</title>
        <authorList>
            <person name="Zody M.C."/>
            <person name="Garber M."/>
            <person name="Sharpe T."/>
            <person name="Young S.K."/>
            <person name="Rowen L."/>
            <person name="O'Neill K."/>
            <person name="Whittaker C.A."/>
            <person name="Kamal M."/>
            <person name="Chang J.L."/>
            <person name="Cuomo C.A."/>
            <person name="Dewar K."/>
            <person name="FitzGerald M.G."/>
            <person name="Kodira C.D."/>
            <person name="Madan A."/>
            <person name="Qin S."/>
            <person name="Yang X."/>
            <person name="Abbasi N."/>
            <person name="Abouelleil A."/>
            <person name="Arachchi H.M."/>
            <person name="Baradarani L."/>
            <person name="Birditt B."/>
            <person name="Bloom S."/>
            <person name="Bloom T."/>
            <person name="Borowsky M.L."/>
            <person name="Burke J."/>
            <person name="Butler J."/>
            <person name="Cook A."/>
            <person name="DeArellano K."/>
            <person name="DeCaprio D."/>
            <person name="Dorris L. III"/>
            <person name="Dors M."/>
            <person name="Eichler E.E."/>
            <person name="Engels R."/>
            <person name="Fahey J."/>
            <person name="Fleetwood P."/>
            <person name="Friedman C."/>
            <person name="Gearin G."/>
            <person name="Hall J.L."/>
            <person name="Hensley G."/>
            <person name="Johnson E."/>
            <person name="Jones C."/>
            <person name="Kamat A."/>
            <person name="Kaur A."/>
            <person name="Locke D.P."/>
            <person name="Madan A."/>
            <person name="Munson G."/>
            <person name="Jaffe D.B."/>
            <person name="Lui A."/>
            <person name="Macdonald P."/>
            <person name="Mauceli E."/>
            <person name="Naylor J.W."/>
            <person name="Nesbitt R."/>
            <person name="Nicol R."/>
            <person name="O'Leary S.B."/>
            <person name="Ratcliffe A."/>
            <person name="Rounsley S."/>
            <person name="She X."/>
            <person name="Sneddon K.M.B."/>
            <person name="Stewart S."/>
            <person name="Sougnez C."/>
            <person name="Stone S.M."/>
            <person name="Topham K."/>
            <person name="Vincent D."/>
            <person name="Wang S."/>
            <person name="Zimmer A.R."/>
            <person name="Birren B.W."/>
            <person name="Hood L."/>
            <person name="Lander E.S."/>
            <person name="Nusbaum C."/>
        </authorList>
    </citation>
    <scope>NUCLEOTIDE SEQUENCE [LARGE SCALE GENOMIC DNA]</scope>
</reference>
<reference key="4">
    <citation type="journal article" date="2011" name="Am. J. Physiol.">
        <title>Similar Effects of all WNK3 Variants upon SLC12 Cotransporters.</title>
        <authorList>
            <person name="Cruz-Rangel S."/>
            <person name="Melo Z."/>
            <person name="Vazquez N."/>
            <person name="Meade P."/>
            <person name="Bobadilla N.A."/>
            <person name="Pasantes-Morales H."/>
            <person name="Gamba G."/>
            <person name="Mercado A."/>
        </authorList>
    </citation>
    <scope>ACTIVITY REGULATION</scope>
</reference>
<reference key="5">
    <citation type="journal article" date="2011" name="J. Cell Sci.">
        <title>Regulation of the NKCC2 ion cotransporter by SPAK-OSR1-dependent and -independent pathways.</title>
        <authorList>
            <person name="Richardson C."/>
            <person name="Sakamoto K."/>
            <person name="de los Heros P."/>
            <person name="Deak M."/>
            <person name="Campbell D.G."/>
            <person name="Prescott A.R."/>
            <person name="Alessi D.R."/>
        </authorList>
    </citation>
    <scope>FUNCTION</scope>
    <scope>ACTIVITY REGULATION</scope>
    <scope>SUBCELLULAR LOCATION</scope>
    <scope>DOMAIN</scope>
    <scope>PHOSPHORYLATION AT SER-91; THR-95; THR-100; THR-105 AND SER-130</scope>
    <scope>MUTAGENESIS OF ARG-20; 95-THR--THR-100; LYS-176 AND LYS-965</scope>
</reference>
<reference key="6">
    <citation type="journal article" date="2018" name="Am. J. Physiol.">
        <title>H+-ATPase B1 subunit localizes to thick ascending limb and distal convoluted tubule of rodent and human kidney.</title>
        <authorList>
            <person name="Frische S."/>
            <person name="Chambrey R."/>
            <person name="Trepiccione F."/>
            <person name="Zamani R."/>
            <person name="Marcussen N."/>
            <person name="Alexander R.T."/>
            <person name="Skjoedt K."/>
            <person name="Svenningsen P."/>
            <person name="Dimke H."/>
        </authorList>
    </citation>
    <scope>TISSUE SPECIFICITY</scope>
</reference>
<accession>Q13621</accession>
<accession>A8JYA2</accession>
<accession>E9PDW4</accession>
<gene>
    <name type="primary">SLC12A1</name>
    <name evidence="10" type="synonym">NKCC2</name>
</gene>
<sequence length="1099" mass="121450">MSLNNSSNVFLDSVPSNTNRFQVSVINENHESSAAADDNTDPPHYEETSFGDEAQKRLRISFRPGNQECYDNFLQSGETAKTDASFHAYDSHTNTYYLQTFGHNTMDAVPKIEYYRNTGSISGPKVNRPSLLEIHEQLAKNVAVTPSSADRVANGDGIPGDEQAENKEDDQAGVVKFGWVKGVLVRCMLNIWGVMLFIRLSWIVGEAGIGLGVLIILLSTMVTSITGLSTSAIATNGFVRGGGAYYLISRSLGPEFGGSIGLIFAFANAVAVAMYVVGFAETVVDLLKESDSMMVDPTNDIRIIGSITVVILLGISVAGMEWEAKAQVILLVILLIAIANFFIGTVIPSNNEKKSRGFFNYQASIFAENFGPRFTKGEGFFSVFAIFFPAATGILAGANISGDLEDPQDAIPRGTMLAIFITTVAYLGVAICVGACVVRDATGNMNDTIISGMNCNGSAACGLGYDFSRCRHEPCQYGLMNNFQVMSMVSGFGPLITAGIFSATLSSALASLVSAPKVFQALCKDNIYKALQFFAKGYGKNNEPLRGYILTFLIAMAFILIAELNTIAPIISNFFLASYALINFSCFHASYAKSPGWRPAYGIYNMWVSLFGAVLCCAVMFVINWWAAVITYVIEFFLYVYVTCKKPDVNWGSSTQALSYVSALDNALELTTVEDHVKNFRPQCIVLTGGPMTRPALLDITHAFTKNSGLCICCEVFVGPRKLCVKEMNSGMAKKQAWLIKNKIKAFYAAVAADCFRDGVRSLLQASGLGRMKPNTLVIGYKKNWRKAPLTEIENYVGIIHDAFDFEIGVVIVRISQGFDISQVLQVQEELERLEQERLALEATIKDNECEEESGGIRGLFKKAGKLNITKTTPKKDGSINTSQSMHVGEFNQKLVEASTQFKKKQEKGTIDVWWLFDDGGLTLLIPYILTLRKKWKDCKLRIYVGGKINRIEEEKIVMASLLSKFRIKFADIHIIGDINIRPNKESWKVFEEMIEPYRLHESCKDLTTAEKLKRETPWKITDAELEAVKEKSYRQVRLNELLQEHSRAANLIVLSLPVARKGSISDLLYMAWLEILTKNLPPVLLVRGNHKNVLTFYS</sequence>
<organism>
    <name type="scientific">Homo sapiens</name>
    <name type="common">Human</name>
    <dbReference type="NCBI Taxonomy" id="9606"/>
    <lineage>
        <taxon>Eukaryota</taxon>
        <taxon>Metazoa</taxon>
        <taxon>Chordata</taxon>
        <taxon>Craniata</taxon>
        <taxon>Vertebrata</taxon>
        <taxon>Euteleostomi</taxon>
        <taxon>Mammalia</taxon>
        <taxon>Eutheria</taxon>
        <taxon>Euarchontoglires</taxon>
        <taxon>Primates</taxon>
        <taxon>Haplorrhini</taxon>
        <taxon>Catarrhini</taxon>
        <taxon>Hominidae</taxon>
        <taxon>Homo</taxon>
    </lineage>
</organism>